<keyword id="KW-0010">Activator</keyword>
<keyword id="KW-0238">DNA-binding</keyword>
<keyword id="KW-1185">Reference proteome</keyword>
<keyword id="KW-0804">Transcription</keyword>
<keyword id="KW-0805">Transcription regulation</keyword>
<evidence type="ECO:0000250" key="1">
    <source>
        <dbReference type="UniProtKB" id="O14467"/>
    </source>
</evidence>
<evidence type="ECO:0000255" key="2">
    <source>
        <dbReference type="PROSITE-ProRule" id="PRU00257"/>
    </source>
</evidence>
<evidence type="ECO:0000256" key="3">
    <source>
        <dbReference type="SAM" id="MobiDB-lite"/>
    </source>
</evidence>
<evidence type="ECO:0000305" key="4"/>
<name>MBF1_CANGA</name>
<dbReference type="EMBL" id="CR380959">
    <property type="protein sequence ID" value="CAG62540.1"/>
    <property type="molecule type" value="Genomic_DNA"/>
</dbReference>
<dbReference type="RefSeq" id="XP_449564.1">
    <property type="nucleotide sequence ID" value="XM_449564.1"/>
</dbReference>
<dbReference type="SMR" id="Q6FJN0"/>
<dbReference type="FunCoup" id="Q6FJN0">
    <property type="interactions" value="821"/>
</dbReference>
<dbReference type="STRING" id="284593.Q6FJN0"/>
<dbReference type="EnsemblFungi" id="CAGL0M04983g-T">
    <property type="protein sequence ID" value="CAGL0M04983g-T-p1"/>
    <property type="gene ID" value="CAGL0M04983g"/>
</dbReference>
<dbReference type="KEGG" id="cgr:2891574"/>
<dbReference type="CGD" id="CAL0136719">
    <property type="gene designation" value="CAGL0M04983g"/>
</dbReference>
<dbReference type="VEuPathDB" id="FungiDB:B1J91_M04983g"/>
<dbReference type="VEuPathDB" id="FungiDB:CAGL0M04983g"/>
<dbReference type="eggNOG" id="KOG3398">
    <property type="taxonomic scope" value="Eukaryota"/>
</dbReference>
<dbReference type="HOGENOM" id="CLU_112609_0_1_1"/>
<dbReference type="InParanoid" id="Q6FJN0"/>
<dbReference type="OMA" id="GKNKSCK"/>
<dbReference type="Proteomes" id="UP000002428">
    <property type="component" value="Chromosome M"/>
</dbReference>
<dbReference type="GO" id="GO:0005737">
    <property type="term" value="C:cytoplasm"/>
    <property type="evidence" value="ECO:0007669"/>
    <property type="project" value="EnsemblFungi"/>
</dbReference>
<dbReference type="GO" id="GO:0005576">
    <property type="term" value="C:extracellular region"/>
    <property type="evidence" value="ECO:0000314"/>
    <property type="project" value="CGD"/>
</dbReference>
<dbReference type="GO" id="GO:0005634">
    <property type="term" value="C:nucleus"/>
    <property type="evidence" value="ECO:0007669"/>
    <property type="project" value="EnsemblFungi"/>
</dbReference>
<dbReference type="GO" id="GO:0003677">
    <property type="term" value="F:DNA binding"/>
    <property type="evidence" value="ECO:0007669"/>
    <property type="project" value="UniProtKB-KW"/>
</dbReference>
<dbReference type="GO" id="GO:0043022">
    <property type="term" value="F:ribosome binding"/>
    <property type="evidence" value="ECO:0007669"/>
    <property type="project" value="EnsemblFungi"/>
</dbReference>
<dbReference type="GO" id="GO:0140469">
    <property type="term" value="P:GCN2-mediated signaling"/>
    <property type="evidence" value="ECO:0007669"/>
    <property type="project" value="EnsemblFungi"/>
</dbReference>
<dbReference type="GO" id="GO:1990145">
    <property type="term" value="P:maintenance of translational fidelity"/>
    <property type="evidence" value="ECO:0007669"/>
    <property type="project" value="EnsemblFungi"/>
</dbReference>
<dbReference type="GO" id="GO:0072344">
    <property type="term" value="P:rescue of stalled ribosome"/>
    <property type="evidence" value="ECO:0007669"/>
    <property type="project" value="EnsemblFungi"/>
</dbReference>
<dbReference type="CDD" id="cd00093">
    <property type="entry name" value="HTH_XRE"/>
    <property type="match status" value="1"/>
</dbReference>
<dbReference type="FunFam" id="1.10.260.40:FF:000015">
    <property type="entry name" value="Endothelial differentiation-related factor 1"/>
    <property type="match status" value="1"/>
</dbReference>
<dbReference type="Gene3D" id="1.10.260.40">
    <property type="entry name" value="lambda repressor-like DNA-binding domains"/>
    <property type="match status" value="1"/>
</dbReference>
<dbReference type="InterPro" id="IPR001387">
    <property type="entry name" value="Cro/C1-type_HTH"/>
</dbReference>
<dbReference type="InterPro" id="IPR010982">
    <property type="entry name" value="Lambda_DNA-bd_dom_sf"/>
</dbReference>
<dbReference type="InterPro" id="IPR013729">
    <property type="entry name" value="MBF1_N"/>
</dbReference>
<dbReference type="PANTHER" id="PTHR10245:SF15">
    <property type="entry name" value="ENDOTHELIAL DIFFERENTIATION-RELATED FACTOR 1"/>
    <property type="match status" value="1"/>
</dbReference>
<dbReference type="PANTHER" id="PTHR10245">
    <property type="entry name" value="ENDOTHELIAL DIFFERENTIATION-RELATED FACTOR 1 MULTIPROTEIN BRIDGING FACTOR 1"/>
    <property type="match status" value="1"/>
</dbReference>
<dbReference type="Pfam" id="PF01381">
    <property type="entry name" value="HTH_3"/>
    <property type="match status" value="1"/>
</dbReference>
<dbReference type="Pfam" id="PF08523">
    <property type="entry name" value="MBF1"/>
    <property type="match status" value="1"/>
</dbReference>
<dbReference type="SMART" id="SM00530">
    <property type="entry name" value="HTH_XRE"/>
    <property type="match status" value="1"/>
</dbReference>
<dbReference type="SUPFAM" id="SSF47413">
    <property type="entry name" value="lambda repressor-like DNA-binding domains"/>
    <property type="match status" value="1"/>
</dbReference>
<dbReference type="PROSITE" id="PS50943">
    <property type="entry name" value="HTH_CROC1"/>
    <property type="match status" value="1"/>
</dbReference>
<proteinExistence type="inferred from homology"/>
<sequence>MSDWESHTVIGQKARAGGSGPRANVARTQGQINAARRQGLVLSVDKKYGTANTKGDAEGQRLTKVDRETDIVKPKKLDANVGKTIARVRTEKKMSQKDLATKINEKPTVINDYEAGRAIPNQQVLGKMERALGVKLRGKAIGEPLGGPKKK</sequence>
<reference key="1">
    <citation type="journal article" date="2004" name="Nature">
        <title>Genome evolution in yeasts.</title>
        <authorList>
            <person name="Dujon B."/>
            <person name="Sherman D."/>
            <person name="Fischer G."/>
            <person name="Durrens P."/>
            <person name="Casaregola S."/>
            <person name="Lafontaine I."/>
            <person name="de Montigny J."/>
            <person name="Marck C."/>
            <person name="Neuveglise C."/>
            <person name="Talla E."/>
            <person name="Goffard N."/>
            <person name="Frangeul L."/>
            <person name="Aigle M."/>
            <person name="Anthouard V."/>
            <person name="Babour A."/>
            <person name="Barbe V."/>
            <person name="Barnay S."/>
            <person name="Blanchin S."/>
            <person name="Beckerich J.-M."/>
            <person name="Beyne E."/>
            <person name="Bleykasten C."/>
            <person name="Boisrame A."/>
            <person name="Boyer J."/>
            <person name="Cattolico L."/>
            <person name="Confanioleri F."/>
            <person name="de Daruvar A."/>
            <person name="Despons L."/>
            <person name="Fabre E."/>
            <person name="Fairhead C."/>
            <person name="Ferry-Dumazet H."/>
            <person name="Groppi A."/>
            <person name="Hantraye F."/>
            <person name="Hennequin C."/>
            <person name="Jauniaux N."/>
            <person name="Joyet P."/>
            <person name="Kachouri R."/>
            <person name="Kerrest A."/>
            <person name="Koszul R."/>
            <person name="Lemaire M."/>
            <person name="Lesur I."/>
            <person name="Ma L."/>
            <person name="Muller H."/>
            <person name="Nicaud J.-M."/>
            <person name="Nikolski M."/>
            <person name="Oztas S."/>
            <person name="Ozier-Kalogeropoulos O."/>
            <person name="Pellenz S."/>
            <person name="Potier S."/>
            <person name="Richard G.-F."/>
            <person name="Straub M.-L."/>
            <person name="Suleau A."/>
            <person name="Swennen D."/>
            <person name="Tekaia F."/>
            <person name="Wesolowski-Louvel M."/>
            <person name="Westhof E."/>
            <person name="Wirth B."/>
            <person name="Zeniou-Meyer M."/>
            <person name="Zivanovic Y."/>
            <person name="Bolotin-Fukuhara M."/>
            <person name="Thierry A."/>
            <person name="Bouchier C."/>
            <person name="Caudron B."/>
            <person name="Scarpelli C."/>
            <person name="Gaillardin C."/>
            <person name="Weissenbach J."/>
            <person name="Wincker P."/>
            <person name="Souciet J.-L."/>
        </authorList>
    </citation>
    <scope>NUCLEOTIDE SEQUENCE [LARGE SCALE GENOMIC DNA]</scope>
    <source>
        <strain>ATCC 2001 / BCRC 20586 / JCM 3761 / NBRC 0622 / NRRL Y-65 / CBS 138</strain>
    </source>
</reference>
<gene>
    <name type="primary">MBF1</name>
    <name type="ordered locus">CAGL0M04983g</name>
</gene>
<accession>Q6FJN0</accession>
<feature type="chain" id="PRO_0000149804" description="Multiprotein-bridging factor 1">
    <location>
        <begin position="1"/>
        <end position="151"/>
    </location>
</feature>
<feature type="domain" description="HTH cro/C1-type" evidence="2">
    <location>
        <begin position="85"/>
        <end position="139"/>
    </location>
</feature>
<feature type="DNA-binding region" description="H-T-H motif" evidence="2">
    <location>
        <begin position="96"/>
        <end position="115"/>
    </location>
</feature>
<feature type="region of interest" description="Disordered" evidence="3">
    <location>
        <begin position="1"/>
        <end position="31"/>
    </location>
</feature>
<comment type="function">
    <text evidence="1">Transcriptional coactivator that stimulates GCN4-dependent transcriptional activity by bridging the DNA-binding region of GCN4 and TBP (SPT15), thereby recruiting TBP to GCN4-bound promoters. Involved in induction of the ribosome quality control (RQC) pathway; a pathway that degrades nascent peptide chains during problematic translation. Required to prevent stalled ribosomes from frameshifting.</text>
</comment>
<comment type="similarity">
    <text evidence="4">Belongs to the MBF1 family.</text>
</comment>
<protein>
    <recommendedName>
        <fullName>Multiprotein-bridging factor 1</fullName>
    </recommendedName>
</protein>
<organism>
    <name type="scientific">Candida glabrata (strain ATCC 2001 / BCRC 20586 / JCM 3761 / NBRC 0622 / NRRL Y-65 / CBS 138)</name>
    <name type="common">Yeast</name>
    <name type="synonym">Nakaseomyces glabratus</name>
    <dbReference type="NCBI Taxonomy" id="284593"/>
    <lineage>
        <taxon>Eukaryota</taxon>
        <taxon>Fungi</taxon>
        <taxon>Dikarya</taxon>
        <taxon>Ascomycota</taxon>
        <taxon>Saccharomycotina</taxon>
        <taxon>Saccharomycetes</taxon>
        <taxon>Saccharomycetales</taxon>
        <taxon>Saccharomycetaceae</taxon>
        <taxon>Nakaseomyces</taxon>
    </lineage>
</organism>